<dbReference type="EMBL" id="BA000019">
    <property type="protein sequence ID" value="BAB76484.1"/>
    <property type="molecule type" value="Genomic_DNA"/>
</dbReference>
<dbReference type="PIR" id="AI2403">
    <property type="entry name" value="AI2403"/>
</dbReference>
<dbReference type="RefSeq" id="WP_010998915.1">
    <property type="nucleotide sequence ID" value="NZ_RSCN01000035.1"/>
</dbReference>
<dbReference type="SMR" id="Q8YMY9"/>
<dbReference type="STRING" id="103690.gene:10496838"/>
<dbReference type="KEGG" id="ana:alr4785"/>
<dbReference type="eggNOG" id="COG1825">
    <property type="taxonomic scope" value="Bacteria"/>
</dbReference>
<dbReference type="OrthoDB" id="9786489at2"/>
<dbReference type="Proteomes" id="UP000002483">
    <property type="component" value="Chromosome"/>
</dbReference>
<dbReference type="GO" id="GO:1990904">
    <property type="term" value="C:ribonucleoprotein complex"/>
    <property type="evidence" value="ECO:0007669"/>
    <property type="project" value="UniProtKB-KW"/>
</dbReference>
<dbReference type="GO" id="GO:0005840">
    <property type="term" value="C:ribosome"/>
    <property type="evidence" value="ECO:0007669"/>
    <property type="project" value="UniProtKB-KW"/>
</dbReference>
<dbReference type="GO" id="GO:0008097">
    <property type="term" value="F:5S rRNA binding"/>
    <property type="evidence" value="ECO:0007669"/>
    <property type="project" value="InterPro"/>
</dbReference>
<dbReference type="GO" id="GO:0003735">
    <property type="term" value="F:structural constituent of ribosome"/>
    <property type="evidence" value="ECO:0007669"/>
    <property type="project" value="InterPro"/>
</dbReference>
<dbReference type="GO" id="GO:0006412">
    <property type="term" value="P:translation"/>
    <property type="evidence" value="ECO:0007669"/>
    <property type="project" value="UniProtKB-UniRule"/>
</dbReference>
<dbReference type="CDD" id="cd00495">
    <property type="entry name" value="Ribosomal_L25_TL5_CTC"/>
    <property type="match status" value="1"/>
</dbReference>
<dbReference type="Gene3D" id="2.40.240.10">
    <property type="entry name" value="Ribosomal Protein L25, Chain P"/>
    <property type="match status" value="1"/>
</dbReference>
<dbReference type="HAMAP" id="MF_01336">
    <property type="entry name" value="Ribosomal_bL25"/>
    <property type="match status" value="1"/>
</dbReference>
<dbReference type="InterPro" id="IPR020056">
    <property type="entry name" value="Rbsml_bL25/Gln-tRNA_synth_N"/>
</dbReference>
<dbReference type="InterPro" id="IPR011035">
    <property type="entry name" value="Ribosomal_bL25/Gln-tRNA_synth"/>
</dbReference>
<dbReference type="InterPro" id="IPR020055">
    <property type="entry name" value="Ribosomal_bL25_short"/>
</dbReference>
<dbReference type="InterPro" id="IPR029751">
    <property type="entry name" value="Ribosomal_L25_dom"/>
</dbReference>
<dbReference type="NCBIfam" id="NF004612">
    <property type="entry name" value="PRK05943.1"/>
    <property type="match status" value="1"/>
</dbReference>
<dbReference type="Pfam" id="PF01386">
    <property type="entry name" value="Ribosomal_L25p"/>
    <property type="match status" value="1"/>
</dbReference>
<dbReference type="SUPFAM" id="SSF50715">
    <property type="entry name" value="Ribosomal protein L25-like"/>
    <property type="match status" value="1"/>
</dbReference>
<gene>
    <name evidence="1" type="primary">rplY</name>
    <name type="ordered locus">alr4785</name>
</gene>
<protein>
    <recommendedName>
        <fullName evidence="1">Large ribosomal subunit protein bL25</fullName>
    </recommendedName>
    <alternativeName>
        <fullName evidence="2">50S ribosomal protein L25</fullName>
    </alternativeName>
</protein>
<proteinExistence type="inferred from homology"/>
<keyword id="KW-1185">Reference proteome</keyword>
<keyword id="KW-0687">Ribonucleoprotein</keyword>
<keyword id="KW-0689">Ribosomal protein</keyword>
<keyword id="KW-0694">RNA-binding</keyword>
<keyword id="KW-0699">rRNA-binding</keyword>
<organism>
    <name type="scientific">Nostoc sp. (strain PCC 7120 / SAG 25.82 / UTEX 2576)</name>
    <dbReference type="NCBI Taxonomy" id="103690"/>
    <lineage>
        <taxon>Bacteria</taxon>
        <taxon>Bacillati</taxon>
        <taxon>Cyanobacteriota</taxon>
        <taxon>Cyanophyceae</taxon>
        <taxon>Nostocales</taxon>
        <taxon>Nostocaceae</taxon>
        <taxon>Nostoc</taxon>
    </lineage>
</organism>
<comment type="function">
    <text evidence="1">This is one of the proteins that binds to the 5S RNA in the ribosome where it forms part of the central protuberance.</text>
</comment>
<comment type="subunit">
    <text evidence="1">Part of the 50S ribosomal subunit; part of the 5S rRNA/L5/L18/L25 subcomplex. Contacts the 5S rRNA. Binds to the 5S rRNA independently of L5 and L18.</text>
</comment>
<comment type="similarity">
    <text evidence="1">Belongs to the bacterial ribosomal protein bL25 family.</text>
</comment>
<feature type="chain" id="PRO_0000181471" description="Large ribosomal subunit protein bL25">
    <location>
        <begin position="1"/>
        <end position="99"/>
    </location>
</feature>
<reference key="1">
    <citation type="journal article" date="2001" name="DNA Res.">
        <title>Complete genomic sequence of the filamentous nitrogen-fixing cyanobacterium Anabaena sp. strain PCC 7120.</title>
        <authorList>
            <person name="Kaneko T."/>
            <person name="Nakamura Y."/>
            <person name="Wolk C.P."/>
            <person name="Kuritz T."/>
            <person name="Sasamoto S."/>
            <person name="Watanabe A."/>
            <person name="Iriguchi M."/>
            <person name="Ishikawa A."/>
            <person name="Kawashima K."/>
            <person name="Kimura T."/>
            <person name="Kishida Y."/>
            <person name="Kohara M."/>
            <person name="Matsumoto M."/>
            <person name="Matsuno A."/>
            <person name="Muraki A."/>
            <person name="Nakazaki N."/>
            <person name="Shimpo S."/>
            <person name="Sugimoto M."/>
            <person name="Takazawa M."/>
            <person name="Yamada M."/>
            <person name="Yasuda M."/>
            <person name="Tabata S."/>
        </authorList>
    </citation>
    <scope>NUCLEOTIDE SEQUENCE [LARGE SCALE GENOMIC DNA]</scope>
    <source>
        <strain>PCC 7120 / SAG 25.82 / UTEX 2576</strain>
    </source>
</reference>
<accession>Q8YMY9</accession>
<name>RL25_NOSS1</name>
<sequence>MALTVETKKRPEGSKPKALRRAGFIPANLYGHNGRESISLVVDAKVVERLLKAAAVKKTEIELNIPELEWTGKTILQEVQIHPAKGTPYHISFLATAKG</sequence>
<evidence type="ECO:0000255" key="1">
    <source>
        <dbReference type="HAMAP-Rule" id="MF_01336"/>
    </source>
</evidence>
<evidence type="ECO:0000305" key="2"/>